<accession>P30264</accession>
<reference key="1">
    <citation type="journal article" date="1992" name="Plant Physiol.">
        <title>Molecular cloning and nucleotide sequence of a cDNA encoding catalase from tomato.</title>
        <authorList>
            <person name="Drory A."/>
            <person name="Woodson W.R."/>
        </authorList>
    </citation>
    <scope>NUCLEOTIDE SEQUENCE [MRNA]</scope>
</reference>
<feature type="chain" id="PRO_0000084944" description="Catalase isozyme 1">
    <location>
        <begin position="1"/>
        <end position="492"/>
    </location>
</feature>
<feature type="active site" evidence="2">
    <location>
        <position position="65"/>
    </location>
</feature>
<feature type="active site" evidence="2">
    <location>
        <position position="138"/>
    </location>
</feature>
<feature type="binding site" description="axial binding residue" evidence="1">
    <location>
        <position position="348"/>
    </location>
    <ligand>
        <name>heme</name>
        <dbReference type="ChEBI" id="CHEBI:30413"/>
    </ligand>
    <ligandPart>
        <name>Fe</name>
        <dbReference type="ChEBI" id="CHEBI:18248"/>
    </ligandPart>
</feature>
<proteinExistence type="evidence at transcript level"/>
<sequence>MDPSKYRPSSAYDTPFLTTNAGGPVYNNVSSLTVGPRGPVLLEDYYLIEKLATFDREKIPERVVHARGASAKGFFEVTHDISHLTCADFLRAPGAQTPVICRFSTVVHERGSPESIRDIRGFAVKFYTREGNFDLVGNNVPVFFNRDAKSFPDTIRALKPNPKSHIQENWRILDFFSFLPESLHTFAFFYDDVCLPTDYRHMEGFGVHAYQLINKEGKAHYVKFHWKPTCGVKCMSEEEAIRVGGTNHSHATKDLYDSIAAGNYPEWKLFIQTMDPEDVDKFDFDPLDVTKTWPEDLLPLIPVGRLVLNRNIDNFFAENEQLAFNPGHIVPGIYYSEDKLLQTRIFAYADTQRHRIGPNYMQLPVNAPKCGHHNNHRDGAMNMTHRDEEVDYLPSRFDPCRPAEQYPIPSCVLNGRRTNCVIPKENNFKQAGERYRSWEPDRQDRYINKWVESLSDPRVTHEIRSIWISYLSQADKSCGQKVASRLTVKPTM</sequence>
<comment type="function">
    <text>Occurs in almost all aerobically respiring organisms and serves to protect cells from the toxic effects of hydrogen peroxide.</text>
</comment>
<comment type="catalytic activity">
    <reaction evidence="2">
        <text>2 H2O2 = O2 + 2 H2O</text>
        <dbReference type="Rhea" id="RHEA:20309"/>
        <dbReference type="ChEBI" id="CHEBI:15377"/>
        <dbReference type="ChEBI" id="CHEBI:15379"/>
        <dbReference type="ChEBI" id="CHEBI:16240"/>
        <dbReference type="EC" id="1.11.1.6"/>
    </reaction>
</comment>
<comment type="cofactor">
    <cofactor>
        <name>heme</name>
        <dbReference type="ChEBI" id="CHEBI:30413"/>
    </cofactor>
</comment>
<comment type="subunit">
    <text evidence="1">Homotetramer.</text>
</comment>
<comment type="subcellular location">
    <subcellularLocation>
        <location evidence="1">Peroxisome</location>
    </subcellularLocation>
</comment>
<comment type="similarity">
    <text evidence="3">Belongs to the catalase family.</text>
</comment>
<protein>
    <recommendedName>
        <fullName>Catalase isozyme 1</fullName>
        <ecNumber>1.11.1.6</ecNumber>
    </recommendedName>
</protein>
<dbReference type="EC" id="1.11.1.6"/>
<dbReference type="EMBL" id="M93719">
    <property type="protein sequence ID" value="AAA34145.1"/>
    <property type="molecule type" value="mRNA"/>
</dbReference>
<dbReference type="RefSeq" id="NP_001234827.1">
    <property type="nucleotide sequence ID" value="NM_001247898.1"/>
</dbReference>
<dbReference type="SMR" id="P30264"/>
<dbReference type="STRING" id="4081.P30264"/>
<dbReference type="PaxDb" id="4081-Solyc12g094620.1.1"/>
<dbReference type="GeneID" id="543990"/>
<dbReference type="KEGG" id="sly:543990"/>
<dbReference type="eggNOG" id="KOG0047">
    <property type="taxonomic scope" value="Eukaryota"/>
</dbReference>
<dbReference type="InParanoid" id="P30264"/>
<dbReference type="OrthoDB" id="6880011at2759"/>
<dbReference type="Proteomes" id="UP000004994">
    <property type="component" value="Unplaced"/>
</dbReference>
<dbReference type="ExpressionAtlas" id="P30264">
    <property type="expression patterns" value="baseline and differential"/>
</dbReference>
<dbReference type="GO" id="GO:0005737">
    <property type="term" value="C:cytoplasm"/>
    <property type="evidence" value="ECO:0000318"/>
    <property type="project" value="GO_Central"/>
</dbReference>
<dbReference type="GO" id="GO:0005777">
    <property type="term" value="C:peroxisome"/>
    <property type="evidence" value="ECO:0000318"/>
    <property type="project" value="GO_Central"/>
</dbReference>
<dbReference type="GO" id="GO:0005886">
    <property type="term" value="C:plasma membrane"/>
    <property type="evidence" value="ECO:0000318"/>
    <property type="project" value="GO_Central"/>
</dbReference>
<dbReference type="GO" id="GO:0004096">
    <property type="term" value="F:catalase activity"/>
    <property type="evidence" value="ECO:0000318"/>
    <property type="project" value="GO_Central"/>
</dbReference>
<dbReference type="GO" id="GO:0020037">
    <property type="term" value="F:heme binding"/>
    <property type="evidence" value="ECO:0000318"/>
    <property type="project" value="GO_Central"/>
</dbReference>
<dbReference type="GO" id="GO:0046872">
    <property type="term" value="F:metal ion binding"/>
    <property type="evidence" value="ECO:0007669"/>
    <property type="project" value="UniProtKB-KW"/>
</dbReference>
<dbReference type="GO" id="GO:0042744">
    <property type="term" value="P:hydrogen peroxide catabolic process"/>
    <property type="evidence" value="ECO:0000318"/>
    <property type="project" value="GO_Central"/>
</dbReference>
<dbReference type="GO" id="GO:0042542">
    <property type="term" value="P:response to hydrogen peroxide"/>
    <property type="evidence" value="ECO:0000318"/>
    <property type="project" value="GO_Central"/>
</dbReference>
<dbReference type="CDD" id="cd08154">
    <property type="entry name" value="catalase_clade_1"/>
    <property type="match status" value="1"/>
</dbReference>
<dbReference type="FunFam" id="2.40.180.10:FF:000002">
    <property type="entry name" value="Catalase"/>
    <property type="match status" value="1"/>
</dbReference>
<dbReference type="Gene3D" id="2.40.180.10">
    <property type="entry name" value="Catalase core domain"/>
    <property type="match status" value="1"/>
</dbReference>
<dbReference type="InterPro" id="IPR018028">
    <property type="entry name" value="Catalase"/>
</dbReference>
<dbReference type="InterPro" id="IPR024708">
    <property type="entry name" value="Catalase_AS"/>
</dbReference>
<dbReference type="InterPro" id="IPR024711">
    <property type="entry name" value="Catalase_clade1/3"/>
</dbReference>
<dbReference type="InterPro" id="IPR011614">
    <property type="entry name" value="Catalase_core"/>
</dbReference>
<dbReference type="InterPro" id="IPR002226">
    <property type="entry name" value="Catalase_haem_BS"/>
</dbReference>
<dbReference type="InterPro" id="IPR010582">
    <property type="entry name" value="Catalase_immune_responsive"/>
</dbReference>
<dbReference type="InterPro" id="IPR020835">
    <property type="entry name" value="Catalase_sf"/>
</dbReference>
<dbReference type="PANTHER" id="PTHR11465">
    <property type="entry name" value="CATALASE"/>
    <property type="match status" value="1"/>
</dbReference>
<dbReference type="PANTHER" id="PTHR11465:SF64">
    <property type="entry name" value="CATALASE ISOZYME 1"/>
    <property type="match status" value="1"/>
</dbReference>
<dbReference type="Pfam" id="PF00199">
    <property type="entry name" value="Catalase"/>
    <property type="match status" value="1"/>
</dbReference>
<dbReference type="Pfam" id="PF06628">
    <property type="entry name" value="Catalase-rel"/>
    <property type="match status" value="1"/>
</dbReference>
<dbReference type="PIRSF" id="PIRSF038928">
    <property type="entry name" value="Catalase_clade1-3"/>
    <property type="match status" value="1"/>
</dbReference>
<dbReference type="PRINTS" id="PR00067">
    <property type="entry name" value="CATALASE"/>
</dbReference>
<dbReference type="SMART" id="SM01060">
    <property type="entry name" value="Catalase"/>
    <property type="match status" value="1"/>
</dbReference>
<dbReference type="SUPFAM" id="SSF56634">
    <property type="entry name" value="Heme-dependent catalase-like"/>
    <property type="match status" value="1"/>
</dbReference>
<dbReference type="PROSITE" id="PS00437">
    <property type="entry name" value="CATALASE_1"/>
    <property type="match status" value="1"/>
</dbReference>
<dbReference type="PROSITE" id="PS00438">
    <property type="entry name" value="CATALASE_2"/>
    <property type="match status" value="1"/>
</dbReference>
<dbReference type="PROSITE" id="PS51402">
    <property type="entry name" value="CATALASE_3"/>
    <property type="match status" value="1"/>
</dbReference>
<gene>
    <name type="primary">CAT1</name>
</gene>
<organism>
    <name type="scientific">Solanum lycopersicum</name>
    <name type="common">Tomato</name>
    <name type="synonym">Lycopersicon esculentum</name>
    <dbReference type="NCBI Taxonomy" id="4081"/>
    <lineage>
        <taxon>Eukaryota</taxon>
        <taxon>Viridiplantae</taxon>
        <taxon>Streptophyta</taxon>
        <taxon>Embryophyta</taxon>
        <taxon>Tracheophyta</taxon>
        <taxon>Spermatophyta</taxon>
        <taxon>Magnoliopsida</taxon>
        <taxon>eudicotyledons</taxon>
        <taxon>Gunneridae</taxon>
        <taxon>Pentapetalae</taxon>
        <taxon>asterids</taxon>
        <taxon>lamiids</taxon>
        <taxon>Solanales</taxon>
        <taxon>Solanaceae</taxon>
        <taxon>Solanoideae</taxon>
        <taxon>Solaneae</taxon>
        <taxon>Solanum</taxon>
        <taxon>Solanum subgen. Lycopersicon</taxon>
    </lineage>
</organism>
<name>CATA1_SOLLC</name>
<evidence type="ECO:0000250" key="1"/>
<evidence type="ECO:0000255" key="2">
    <source>
        <dbReference type="PROSITE-ProRule" id="PRU10013"/>
    </source>
</evidence>
<evidence type="ECO:0000305" key="3"/>
<keyword id="KW-0349">Heme</keyword>
<keyword id="KW-0376">Hydrogen peroxide</keyword>
<keyword id="KW-0408">Iron</keyword>
<keyword id="KW-0479">Metal-binding</keyword>
<keyword id="KW-0560">Oxidoreductase</keyword>
<keyword id="KW-0575">Peroxidase</keyword>
<keyword id="KW-0576">Peroxisome</keyword>
<keyword id="KW-1185">Reference proteome</keyword>